<accession>Q030U0</accession>
<reference key="1">
    <citation type="journal article" date="2006" name="Proc. Natl. Acad. Sci. U.S.A.">
        <title>Comparative genomics of the lactic acid bacteria.</title>
        <authorList>
            <person name="Makarova K.S."/>
            <person name="Slesarev A."/>
            <person name="Wolf Y.I."/>
            <person name="Sorokin A."/>
            <person name="Mirkin B."/>
            <person name="Koonin E.V."/>
            <person name="Pavlov A."/>
            <person name="Pavlova N."/>
            <person name="Karamychev V."/>
            <person name="Polouchine N."/>
            <person name="Shakhova V."/>
            <person name="Grigoriev I."/>
            <person name="Lou Y."/>
            <person name="Rohksar D."/>
            <person name="Lucas S."/>
            <person name="Huang K."/>
            <person name="Goodstein D.M."/>
            <person name="Hawkins T."/>
            <person name="Plengvidhya V."/>
            <person name="Welker D."/>
            <person name="Hughes J."/>
            <person name="Goh Y."/>
            <person name="Benson A."/>
            <person name="Baldwin K."/>
            <person name="Lee J.-H."/>
            <person name="Diaz-Muniz I."/>
            <person name="Dosti B."/>
            <person name="Smeianov V."/>
            <person name="Wechter W."/>
            <person name="Barabote R."/>
            <person name="Lorca G."/>
            <person name="Altermann E."/>
            <person name="Barrangou R."/>
            <person name="Ganesan B."/>
            <person name="Xie Y."/>
            <person name="Rawsthorne H."/>
            <person name="Tamir D."/>
            <person name="Parker C."/>
            <person name="Breidt F."/>
            <person name="Broadbent J.R."/>
            <person name="Hutkins R."/>
            <person name="O'Sullivan D."/>
            <person name="Steele J."/>
            <person name="Unlu G."/>
            <person name="Saier M.H. Jr."/>
            <person name="Klaenhammer T."/>
            <person name="Richardson P."/>
            <person name="Kozyavkin S."/>
            <person name="Weimer B.C."/>
            <person name="Mills D.A."/>
        </authorList>
    </citation>
    <scope>NUCLEOTIDE SEQUENCE [LARGE SCALE GENOMIC DNA]</scope>
    <source>
        <strain>SK11</strain>
    </source>
</reference>
<feature type="chain" id="PRO_1000010767" description="Elongation factor P">
    <location>
        <begin position="1"/>
        <end position="185"/>
    </location>
</feature>
<protein>
    <recommendedName>
        <fullName evidence="1">Elongation factor P</fullName>
        <shortName evidence="1">EF-P</shortName>
    </recommendedName>
</protein>
<proteinExistence type="inferred from homology"/>
<evidence type="ECO:0000255" key="1">
    <source>
        <dbReference type="HAMAP-Rule" id="MF_00141"/>
    </source>
</evidence>
<sequence>MVLAKDLKSGMTFLNGEKLLRVMEASHHKPGKGNTIMRMKLKDVRSGSTFDDTYRPEDKFEQAVIETVTAQYLYSMDDIANFMNNETYEQYEIPVEQVKDELLYVLENTDVKIQFYGTEVIGIQLPTTVVLEVTETQPSIKGATVTGSGKPATMETGLVVNVPDFVEVGTKLEINTQTGEYLKRA</sequence>
<keyword id="KW-0963">Cytoplasm</keyword>
<keyword id="KW-0251">Elongation factor</keyword>
<keyword id="KW-0648">Protein biosynthesis</keyword>
<name>EFP_LACLS</name>
<dbReference type="EMBL" id="CP000425">
    <property type="protein sequence ID" value="ABJ72282.1"/>
    <property type="molecule type" value="Genomic_DNA"/>
</dbReference>
<dbReference type="RefSeq" id="WP_011675652.1">
    <property type="nucleotide sequence ID" value="NC_008527.1"/>
</dbReference>
<dbReference type="SMR" id="Q030U0"/>
<dbReference type="GeneID" id="61108950"/>
<dbReference type="KEGG" id="llc:LACR_0720"/>
<dbReference type="HOGENOM" id="CLU_074944_3_0_9"/>
<dbReference type="UniPathway" id="UPA00345"/>
<dbReference type="Proteomes" id="UP000000240">
    <property type="component" value="Chromosome"/>
</dbReference>
<dbReference type="GO" id="GO:0005737">
    <property type="term" value="C:cytoplasm"/>
    <property type="evidence" value="ECO:0007669"/>
    <property type="project" value="UniProtKB-SubCell"/>
</dbReference>
<dbReference type="GO" id="GO:0003746">
    <property type="term" value="F:translation elongation factor activity"/>
    <property type="evidence" value="ECO:0007669"/>
    <property type="project" value="UniProtKB-UniRule"/>
</dbReference>
<dbReference type="GO" id="GO:0043043">
    <property type="term" value="P:peptide biosynthetic process"/>
    <property type="evidence" value="ECO:0007669"/>
    <property type="project" value="InterPro"/>
</dbReference>
<dbReference type="CDD" id="cd04470">
    <property type="entry name" value="S1_EF-P_repeat_1"/>
    <property type="match status" value="1"/>
</dbReference>
<dbReference type="CDD" id="cd05794">
    <property type="entry name" value="S1_EF-P_repeat_2"/>
    <property type="match status" value="1"/>
</dbReference>
<dbReference type="FunFam" id="2.30.30.30:FF:000003">
    <property type="entry name" value="Elongation factor P"/>
    <property type="match status" value="1"/>
</dbReference>
<dbReference type="FunFam" id="2.40.50.140:FF:000004">
    <property type="entry name" value="Elongation factor P"/>
    <property type="match status" value="1"/>
</dbReference>
<dbReference type="FunFam" id="2.40.50.140:FF:000009">
    <property type="entry name" value="Elongation factor P"/>
    <property type="match status" value="1"/>
</dbReference>
<dbReference type="Gene3D" id="2.30.30.30">
    <property type="match status" value="1"/>
</dbReference>
<dbReference type="Gene3D" id="2.40.50.140">
    <property type="entry name" value="Nucleic acid-binding proteins"/>
    <property type="match status" value="2"/>
</dbReference>
<dbReference type="HAMAP" id="MF_00141">
    <property type="entry name" value="EF_P"/>
    <property type="match status" value="1"/>
</dbReference>
<dbReference type="InterPro" id="IPR015365">
    <property type="entry name" value="Elong-fact-P_C"/>
</dbReference>
<dbReference type="InterPro" id="IPR012340">
    <property type="entry name" value="NA-bd_OB-fold"/>
</dbReference>
<dbReference type="InterPro" id="IPR014722">
    <property type="entry name" value="Rib_uL2_dom2"/>
</dbReference>
<dbReference type="InterPro" id="IPR020599">
    <property type="entry name" value="Transl_elong_fac_P/YeiP"/>
</dbReference>
<dbReference type="InterPro" id="IPR013185">
    <property type="entry name" value="Transl_elong_KOW-like"/>
</dbReference>
<dbReference type="InterPro" id="IPR001059">
    <property type="entry name" value="Transl_elong_P/YeiP_cen"/>
</dbReference>
<dbReference type="InterPro" id="IPR013852">
    <property type="entry name" value="Transl_elong_P/YeiP_CS"/>
</dbReference>
<dbReference type="InterPro" id="IPR011768">
    <property type="entry name" value="Transl_elongation_fac_P"/>
</dbReference>
<dbReference type="InterPro" id="IPR008991">
    <property type="entry name" value="Translation_prot_SH3-like_sf"/>
</dbReference>
<dbReference type="NCBIfam" id="TIGR00038">
    <property type="entry name" value="efp"/>
    <property type="match status" value="1"/>
</dbReference>
<dbReference type="NCBIfam" id="NF001810">
    <property type="entry name" value="PRK00529.1"/>
    <property type="match status" value="1"/>
</dbReference>
<dbReference type="PANTHER" id="PTHR30053">
    <property type="entry name" value="ELONGATION FACTOR P"/>
    <property type="match status" value="1"/>
</dbReference>
<dbReference type="PANTHER" id="PTHR30053:SF12">
    <property type="entry name" value="ELONGATION FACTOR P (EF-P) FAMILY PROTEIN"/>
    <property type="match status" value="1"/>
</dbReference>
<dbReference type="Pfam" id="PF01132">
    <property type="entry name" value="EFP"/>
    <property type="match status" value="1"/>
</dbReference>
<dbReference type="Pfam" id="PF08207">
    <property type="entry name" value="EFP_N"/>
    <property type="match status" value="1"/>
</dbReference>
<dbReference type="Pfam" id="PF09285">
    <property type="entry name" value="Elong-fact-P_C"/>
    <property type="match status" value="1"/>
</dbReference>
<dbReference type="PIRSF" id="PIRSF005901">
    <property type="entry name" value="EF-P"/>
    <property type="match status" value="1"/>
</dbReference>
<dbReference type="SMART" id="SM01185">
    <property type="entry name" value="EFP"/>
    <property type="match status" value="1"/>
</dbReference>
<dbReference type="SMART" id="SM00841">
    <property type="entry name" value="Elong-fact-P_C"/>
    <property type="match status" value="1"/>
</dbReference>
<dbReference type="SUPFAM" id="SSF50249">
    <property type="entry name" value="Nucleic acid-binding proteins"/>
    <property type="match status" value="2"/>
</dbReference>
<dbReference type="SUPFAM" id="SSF50104">
    <property type="entry name" value="Translation proteins SH3-like domain"/>
    <property type="match status" value="1"/>
</dbReference>
<dbReference type="PROSITE" id="PS01275">
    <property type="entry name" value="EFP"/>
    <property type="match status" value="1"/>
</dbReference>
<organism>
    <name type="scientific">Lactococcus lactis subsp. cremoris (strain SK11)</name>
    <dbReference type="NCBI Taxonomy" id="272622"/>
    <lineage>
        <taxon>Bacteria</taxon>
        <taxon>Bacillati</taxon>
        <taxon>Bacillota</taxon>
        <taxon>Bacilli</taxon>
        <taxon>Lactobacillales</taxon>
        <taxon>Streptococcaceae</taxon>
        <taxon>Lactococcus</taxon>
        <taxon>Lactococcus cremoris subsp. cremoris</taxon>
    </lineage>
</organism>
<gene>
    <name evidence="1" type="primary">efp</name>
    <name type="ordered locus">LACR_0720</name>
</gene>
<comment type="function">
    <text evidence="1">Involved in peptide bond synthesis. Stimulates efficient translation and peptide-bond synthesis on native or reconstituted 70S ribosomes in vitro. Probably functions indirectly by altering the affinity of the ribosome for aminoacyl-tRNA, thus increasing their reactivity as acceptors for peptidyl transferase.</text>
</comment>
<comment type="pathway">
    <text evidence="1">Protein biosynthesis; polypeptide chain elongation.</text>
</comment>
<comment type="subcellular location">
    <subcellularLocation>
        <location evidence="1">Cytoplasm</location>
    </subcellularLocation>
</comment>
<comment type="similarity">
    <text evidence="1">Belongs to the elongation factor P family.</text>
</comment>